<sequence>MTSTIPTPPSIPFLGHVASIEREVPLRSFRLLSEQYGEIYELNILGRKLLVVSSAKLMSDVSDDKNFYKNMSGPLLQVRNAVGDGLFTAYGEEPNWGIAHRLLMPAFGTASIRDMFPDMLDLASQLVLKWERFGPKHRIDPAEDFTRLTLDTIALCAMSYRLNSFYRDSSHPFVQSMVDFLVECNLRANRPGLLTSVMVQTNAKYEEDIKTMTELADEIIAERRRNPTDKKDLLNIMLYSKDPKTGQSLSDVNIRNNLLTFLIAGHEPTSGLLTFALYYLIKNPEAMRKAHEEVDEVLGDQQIQLTDIGKLKYIDAILRETMRLSPTAPMRTVRPFEDITIGDGKYFVPKDYTVVINTIVAQRDPTVWGEDSNEFHPERMLDGKFEALPPNAWQPFGFGMRACIGRPFAWQEAIIALAVLLQKFDFVLDDPSYELELKQSLTIKPAHFYVHALPREGKPQLLATPSAAPFSSHARETTNASLPASPGTEAKQPMYVLYGSNTGTSESFAQRIANGAAARGFRATLGTLDSVADHLPTDGPIVIVCASFEGEPADNAAHFVERLTSLQDKPLQNLRFAVFGCGHHDWFRTYQRIPKLIDQTLEDRGAQRLVPRGEGDAGSSEFFEAFEAWETKLWEVLPEEYNTVVKQDITSGLKVETVGEGATRAVDLRQHDAALGTVIENRVLTAPGAPQKRHIEFELPEGVTSRAGDYLAILPSNPPQDVHRVLARFGMLPEQQIVISSSGPSSLPTGRQISAFDLLSGYVELSQPATARDVRTLLNVESSDATKESLKALLESYSDAVLGRRLSILDLLEQYPDIKLLFAAYLALLPSMRTRQYSISSSPLWNAQRVTLTVSVLEAPALSGRKEPFLGVASTYLANLRPGDKVQMAVRASNAAFHLPQDPRTPLVLFAAGSGLAPMRGFLQERALQKKAGREVGRAVLFFGCRSPDEDYLYSDSDLKEWEELGVVELRPAFSRALEKSEGCKYVQDRVWHDRRALDGLYEAGAKWFVCGSGKVARGVKEVLTAMIKESRGYSDEEAAAAFERATVGRFATDIFE</sequence>
<accession>G5EJN7</accession>
<name>CYPD6_PHACH</name>
<keyword id="KW-0274">FAD</keyword>
<keyword id="KW-0285">Flavoprotein</keyword>
<keyword id="KW-0288">FMN</keyword>
<keyword id="KW-0349">Heme</keyword>
<keyword id="KW-0408">Iron</keyword>
<keyword id="KW-0479">Metal-binding</keyword>
<keyword id="KW-0503">Monooxygenase</keyword>
<keyword id="KW-0521">NADP</keyword>
<keyword id="KW-0560">Oxidoreductase</keyword>
<keyword id="KW-0813">Transport</keyword>
<dbReference type="EC" id="1.14.14.1" evidence="6"/>
<dbReference type="EC" id="1.6.2.4" evidence="6"/>
<dbReference type="EMBL" id="AB597812">
    <property type="protein sequence ID" value="BAL05099.1"/>
    <property type="molecule type" value="mRNA"/>
</dbReference>
<dbReference type="SMR" id="G5EJN7"/>
<dbReference type="VEuPathDB" id="FungiDB:AGR57_7490"/>
<dbReference type="GO" id="GO:0005829">
    <property type="term" value="C:cytosol"/>
    <property type="evidence" value="ECO:0007669"/>
    <property type="project" value="TreeGrafter"/>
</dbReference>
<dbReference type="GO" id="GO:0070330">
    <property type="term" value="F:aromatase activity"/>
    <property type="evidence" value="ECO:0007669"/>
    <property type="project" value="InterPro"/>
</dbReference>
<dbReference type="GO" id="GO:0050660">
    <property type="term" value="F:flavin adenine dinucleotide binding"/>
    <property type="evidence" value="ECO:0007669"/>
    <property type="project" value="TreeGrafter"/>
</dbReference>
<dbReference type="GO" id="GO:0010181">
    <property type="term" value="F:FMN binding"/>
    <property type="evidence" value="ECO:0007669"/>
    <property type="project" value="InterPro"/>
</dbReference>
<dbReference type="GO" id="GO:0020037">
    <property type="term" value="F:heme binding"/>
    <property type="evidence" value="ECO:0007669"/>
    <property type="project" value="InterPro"/>
</dbReference>
<dbReference type="GO" id="GO:0005506">
    <property type="term" value="F:iron ion binding"/>
    <property type="evidence" value="ECO:0007669"/>
    <property type="project" value="InterPro"/>
</dbReference>
<dbReference type="GO" id="GO:0003958">
    <property type="term" value="F:NADPH-hemoprotein reductase activity"/>
    <property type="evidence" value="ECO:0007669"/>
    <property type="project" value="InterPro"/>
</dbReference>
<dbReference type="CDD" id="cd06206">
    <property type="entry name" value="bifunctional_CYPOR"/>
    <property type="match status" value="1"/>
</dbReference>
<dbReference type="CDD" id="cd11068">
    <property type="entry name" value="CYP120A1"/>
    <property type="match status" value="1"/>
</dbReference>
<dbReference type="FunFam" id="1.10.630.10:FF:000040">
    <property type="entry name" value="Bifunctional cytochrome P450/NADPH--P450 reductase"/>
    <property type="match status" value="1"/>
</dbReference>
<dbReference type="FunFam" id="2.40.30.10:FF:000198">
    <property type="entry name" value="Bifunctional cytochrome P450/NADPH--P450 reductase"/>
    <property type="match status" value="1"/>
</dbReference>
<dbReference type="Gene3D" id="3.40.50.360">
    <property type="match status" value="1"/>
</dbReference>
<dbReference type="Gene3D" id="1.10.630.10">
    <property type="entry name" value="Cytochrome P450"/>
    <property type="match status" value="1"/>
</dbReference>
<dbReference type="Gene3D" id="1.20.990.10">
    <property type="entry name" value="NADPH-cytochrome p450 Reductase, Chain A, domain 3"/>
    <property type="match status" value="1"/>
</dbReference>
<dbReference type="Gene3D" id="3.40.50.80">
    <property type="entry name" value="Nucleotide-binding domain of ferredoxin-NADP reductase (FNR) module"/>
    <property type="match status" value="1"/>
</dbReference>
<dbReference type="Gene3D" id="2.40.30.10">
    <property type="entry name" value="Translation factors"/>
    <property type="match status" value="1"/>
</dbReference>
<dbReference type="InterPro" id="IPR023206">
    <property type="entry name" value="Bifunctional_P450_P450_red"/>
</dbReference>
<dbReference type="InterPro" id="IPR003097">
    <property type="entry name" value="CysJ-like_FAD-binding"/>
</dbReference>
<dbReference type="InterPro" id="IPR001128">
    <property type="entry name" value="Cyt_P450"/>
</dbReference>
<dbReference type="InterPro" id="IPR017972">
    <property type="entry name" value="Cyt_P450_CS"/>
</dbReference>
<dbReference type="InterPro" id="IPR002401">
    <property type="entry name" value="Cyt_P450_E_grp-I"/>
</dbReference>
<dbReference type="InterPro" id="IPR036396">
    <property type="entry name" value="Cyt_P450_sf"/>
</dbReference>
<dbReference type="InterPro" id="IPR017927">
    <property type="entry name" value="FAD-bd_FR_type"/>
</dbReference>
<dbReference type="InterPro" id="IPR008254">
    <property type="entry name" value="Flavodoxin/NO_synth"/>
</dbReference>
<dbReference type="InterPro" id="IPR029039">
    <property type="entry name" value="Flavoprotein-like_sf"/>
</dbReference>
<dbReference type="InterPro" id="IPR039261">
    <property type="entry name" value="FNR_nucleotide-bd"/>
</dbReference>
<dbReference type="InterPro" id="IPR023173">
    <property type="entry name" value="NADPH_Cyt_P450_Rdtase_alpha"/>
</dbReference>
<dbReference type="InterPro" id="IPR001433">
    <property type="entry name" value="OxRdtase_FAD/NAD-bd"/>
</dbReference>
<dbReference type="InterPro" id="IPR017938">
    <property type="entry name" value="Riboflavin_synthase-like_b-brl"/>
</dbReference>
<dbReference type="PANTHER" id="PTHR19384:SF127">
    <property type="entry name" value="BIFUNCTIONAL CYTOCHROME P450_NADPH--P450 REDUCTASE"/>
    <property type="match status" value="1"/>
</dbReference>
<dbReference type="PANTHER" id="PTHR19384">
    <property type="entry name" value="NITRIC OXIDE SYNTHASE-RELATED"/>
    <property type="match status" value="1"/>
</dbReference>
<dbReference type="Pfam" id="PF00667">
    <property type="entry name" value="FAD_binding_1"/>
    <property type="match status" value="1"/>
</dbReference>
<dbReference type="Pfam" id="PF00258">
    <property type="entry name" value="Flavodoxin_1"/>
    <property type="match status" value="1"/>
</dbReference>
<dbReference type="Pfam" id="PF00175">
    <property type="entry name" value="NAD_binding_1"/>
    <property type="match status" value="1"/>
</dbReference>
<dbReference type="Pfam" id="PF00067">
    <property type="entry name" value="p450"/>
    <property type="match status" value="1"/>
</dbReference>
<dbReference type="PIRSF" id="PIRSF000209">
    <property type="entry name" value="Bifunctional_P450_P450R"/>
    <property type="match status" value="1"/>
</dbReference>
<dbReference type="PRINTS" id="PR00463">
    <property type="entry name" value="EP450I"/>
</dbReference>
<dbReference type="PRINTS" id="PR00385">
    <property type="entry name" value="P450"/>
</dbReference>
<dbReference type="SUPFAM" id="SSF48264">
    <property type="entry name" value="Cytochrome P450"/>
    <property type="match status" value="1"/>
</dbReference>
<dbReference type="SUPFAM" id="SSF52343">
    <property type="entry name" value="Ferredoxin reductase-like, C-terminal NADP-linked domain"/>
    <property type="match status" value="1"/>
</dbReference>
<dbReference type="SUPFAM" id="SSF52218">
    <property type="entry name" value="Flavoproteins"/>
    <property type="match status" value="1"/>
</dbReference>
<dbReference type="SUPFAM" id="SSF63380">
    <property type="entry name" value="Riboflavin synthase domain-like"/>
    <property type="match status" value="1"/>
</dbReference>
<dbReference type="PROSITE" id="PS00086">
    <property type="entry name" value="CYTOCHROME_P450"/>
    <property type="match status" value="1"/>
</dbReference>
<dbReference type="PROSITE" id="PS51384">
    <property type="entry name" value="FAD_FR"/>
    <property type="match status" value="1"/>
</dbReference>
<dbReference type="PROSITE" id="PS50902">
    <property type="entry name" value="FLAVODOXIN_LIKE"/>
    <property type="match status" value="1"/>
</dbReference>
<protein>
    <recommendedName>
        <fullName evidence="7">Self-sufficient cytochrome P450 monooxygenase CYP505E3</fullName>
    </recommendedName>
    <alternativeName>
        <fullName evidence="7">Bifunctional cytochrome P450/NADPH--P450 reductase CYP505E3</fullName>
    </alternativeName>
    <domain>
        <recommendedName>
            <fullName evidence="7">Cytochrome P450 monooxygenase</fullName>
            <ecNumber evidence="6">1.14.14.1</ecNumber>
        </recommendedName>
    </domain>
    <domain>
        <recommendedName>
            <fullName evidence="7">NADPH--cytochrome P450 reductase</fullName>
            <ecNumber evidence="6">1.6.2.4</ecNumber>
        </recommendedName>
    </domain>
</protein>
<gene>
    <name evidence="7" type="primary">CYP505D6</name>
    <name type="synonym">PcCYP_17a</name>
</gene>
<reference key="1">
    <citation type="submission" date="2010-10" db="EMBL/GenBank/DDBJ databases">
        <title>Phanerochaete chrysosporium cytochrome P450.</title>
        <authorList>
            <person name="Hirosue S."/>
            <person name="Hiratsuka N."/>
            <person name="Ichinose H."/>
            <person name="Wariishi H."/>
        </authorList>
    </citation>
    <scope>NUCLEOTIDE SEQUENCE [MRNA]</scope>
    <source>
        <strain>ATCC 34541 / NBRC 31249 / ME-446 / PRL 2750</strain>
    </source>
</reference>
<reference key="2">
    <citation type="journal article" date="2018" name="Appl. Environ. Microbiol.">
        <title>Biochemical Characterization of CYP505D6, a Self-Sufficient Cytochrome P450 from the White-Rot Fungus Phanerochaete chrysosporium.</title>
        <authorList>
            <person name="Sakai K."/>
            <person name="Matsuzaki F."/>
            <person name="Wise L."/>
            <person name="Sakai Y."/>
            <person name="Jindou S."/>
            <person name="Ichinose H."/>
            <person name="Takaya N."/>
            <person name="Kato M."/>
            <person name="Wariishi H."/>
            <person name="Shimizu M."/>
        </authorList>
    </citation>
    <scope>FUNCTION</scope>
    <scope>CATALYTIC ACTIVITY</scope>
    <scope>BIOPHYSICOCHEMICAL PROPERTIES</scope>
    <scope>MUTAGENESIS OF VAL-51</scope>
</reference>
<comment type="function">
    <text evidence="6">Self-sufficient cytochrome P450 monooxygenase that catalyzes the regioselective in-chain hydroxylation of fatty alcohols (C9-15) as well as fatty acids (C9-15) at the omega-1 to omega-7 or omega-1 to omega-6 positions, respectively (PubMed:30171007). Is also able to convert naphthalene to 1-naphthol and 1-naphthol further to 1,3-dihydroxynaphthalene (PubMed:30171007).</text>
</comment>
<comment type="catalytic activity">
    <reaction evidence="6">
        <text>2 oxidized [cytochrome P450] + NADPH = 2 reduced [cytochrome P450] + NADP(+) + H(+)</text>
        <dbReference type="Rhea" id="RHEA:24040"/>
        <dbReference type="Rhea" id="RHEA-COMP:14627"/>
        <dbReference type="Rhea" id="RHEA-COMP:14628"/>
        <dbReference type="ChEBI" id="CHEBI:15378"/>
        <dbReference type="ChEBI" id="CHEBI:55376"/>
        <dbReference type="ChEBI" id="CHEBI:57783"/>
        <dbReference type="ChEBI" id="CHEBI:58349"/>
        <dbReference type="ChEBI" id="CHEBI:60344"/>
        <dbReference type="EC" id="1.6.2.4"/>
    </reaction>
</comment>
<comment type="catalytic activity">
    <reaction evidence="6">
        <text>an organic molecule + reduced [NADPH--hemoprotein reductase] + O2 = an alcohol + oxidized [NADPH--hemoprotein reductase] + H2O + H(+)</text>
        <dbReference type="Rhea" id="RHEA:17149"/>
        <dbReference type="Rhea" id="RHEA-COMP:11964"/>
        <dbReference type="Rhea" id="RHEA-COMP:11965"/>
        <dbReference type="ChEBI" id="CHEBI:15377"/>
        <dbReference type="ChEBI" id="CHEBI:15378"/>
        <dbReference type="ChEBI" id="CHEBI:15379"/>
        <dbReference type="ChEBI" id="CHEBI:30879"/>
        <dbReference type="ChEBI" id="CHEBI:57618"/>
        <dbReference type="ChEBI" id="CHEBI:58210"/>
        <dbReference type="ChEBI" id="CHEBI:142491"/>
        <dbReference type="EC" id="1.14.14.1"/>
    </reaction>
</comment>
<comment type="catalytic activity">
    <reaction evidence="6">
        <text>dodecan-1-ol + reduced [NADPH--hemoprotein reductase] + O2 = 1,5-dodecanediol + oxidized [NADPH--hemoprotein reductase] + H2O + H(+)</text>
        <dbReference type="Rhea" id="RHEA:76759"/>
        <dbReference type="Rhea" id="RHEA-COMP:11964"/>
        <dbReference type="Rhea" id="RHEA-COMP:11965"/>
        <dbReference type="ChEBI" id="CHEBI:15377"/>
        <dbReference type="ChEBI" id="CHEBI:15378"/>
        <dbReference type="ChEBI" id="CHEBI:15379"/>
        <dbReference type="ChEBI" id="CHEBI:28878"/>
        <dbReference type="ChEBI" id="CHEBI:57618"/>
        <dbReference type="ChEBI" id="CHEBI:58210"/>
        <dbReference type="ChEBI" id="CHEBI:195414"/>
    </reaction>
    <physiologicalReaction direction="left-to-right" evidence="6">
        <dbReference type="Rhea" id="RHEA:76760"/>
    </physiologicalReaction>
</comment>
<comment type="catalytic activity">
    <reaction evidence="6">
        <text>dodecan-1-ol + reduced [NADPH--hemoprotein reductase] + O2 = 1,6-dodecanediol + oxidized [NADPH--hemoprotein reductase] + H2O + H(+)</text>
        <dbReference type="Rhea" id="RHEA:76779"/>
        <dbReference type="Rhea" id="RHEA-COMP:11964"/>
        <dbReference type="Rhea" id="RHEA-COMP:11965"/>
        <dbReference type="ChEBI" id="CHEBI:15377"/>
        <dbReference type="ChEBI" id="CHEBI:15378"/>
        <dbReference type="ChEBI" id="CHEBI:15379"/>
        <dbReference type="ChEBI" id="CHEBI:28878"/>
        <dbReference type="ChEBI" id="CHEBI:57618"/>
        <dbReference type="ChEBI" id="CHEBI:58210"/>
        <dbReference type="ChEBI" id="CHEBI:195445"/>
    </reaction>
    <physiologicalReaction direction="left-to-right" evidence="6">
        <dbReference type="Rhea" id="RHEA:76780"/>
    </physiologicalReaction>
</comment>
<comment type="cofactor">
    <cofactor evidence="2">
        <name>FAD</name>
        <dbReference type="ChEBI" id="CHEBI:57692"/>
    </cofactor>
    <text evidence="2">Binds 1 FAD.</text>
</comment>
<comment type="cofactor">
    <cofactor evidence="2">
        <name>FMN</name>
        <dbReference type="ChEBI" id="CHEBI:58210"/>
    </cofactor>
    <text evidence="2">Binds 1 FMN.</text>
</comment>
<comment type="cofactor">
    <cofactor evidence="2">
        <name>heme</name>
        <dbReference type="ChEBI" id="CHEBI:30413"/>
    </cofactor>
</comment>
<comment type="biophysicochemical properties">
    <kinetics>
        <KM evidence="6">3800 uM for nonanol</KM>
        <KM evidence="6">1100 uM for decanol</KM>
        <KM evidence="6">420 uM for undecanol</KM>
        <KM evidence="6">350 uM for dodecanol</KM>
        <KM evidence="6">120 uM for tridecanol</KM>
        <KM evidence="6">20 uM for tetradecanol</KM>
        <KM evidence="6">10 uM for pentadecanol</KM>
        <KM evidence="6">18 uM for hexadecanol</KM>
        <KM evidence="6">15 uM for heptadecanol</KM>
        <KM evidence="6">19 uM for octadecanol</KM>
        <KM evidence="6">4500 uM for nonanoic acid</KM>
        <KM evidence="6">1400 uM for decanoic acid</KM>
        <KM evidence="6">610 uM for undecanoic acid</KM>
        <KM evidence="6">450 uM for dodecanoic acid</KM>
        <KM evidence="6">230 uM for tridecanoic acid</KM>
        <KM evidence="6">65 uM for tetradecanoic acid</KM>
        <KM evidence="6">30 uM for pentadecanoic acid</KM>
        <KM evidence="6">38 uM for hexadecanoic acid</KM>
        <KM evidence="6">36 uM for heptadecanoic acid</KM>
        <KM evidence="6">28 uM for octadecanoic acid</KM>
    </kinetics>
</comment>
<comment type="similarity">
    <text evidence="8">In the N-terminal section; belongs to the cytochrome P450 family.</text>
</comment>
<evidence type="ECO:0000250" key="1">
    <source>
        <dbReference type="UniProtKB" id="P14779"/>
    </source>
</evidence>
<evidence type="ECO:0000250" key="2">
    <source>
        <dbReference type="UniProtKB" id="Q9Y8G7"/>
    </source>
</evidence>
<evidence type="ECO:0000255" key="3">
    <source>
        <dbReference type="PROSITE-ProRule" id="PRU00088"/>
    </source>
</evidence>
<evidence type="ECO:0000255" key="4">
    <source>
        <dbReference type="PROSITE-ProRule" id="PRU00716"/>
    </source>
</evidence>
<evidence type="ECO:0000256" key="5">
    <source>
        <dbReference type="SAM" id="MobiDB-lite"/>
    </source>
</evidence>
<evidence type="ECO:0000269" key="6">
    <source>
    </source>
</evidence>
<evidence type="ECO:0000303" key="7">
    <source>
    </source>
</evidence>
<evidence type="ECO:0000305" key="8"/>
<organism>
    <name type="scientific">Phanerodontia chrysosporium</name>
    <name type="common">White-rot fungus</name>
    <name type="synonym">Sporotrichum pruinosum</name>
    <dbReference type="NCBI Taxonomy" id="2822231"/>
    <lineage>
        <taxon>Eukaryota</taxon>
        <taxon>Fungi</taxon>
        <taxon>Dikarya</taxon>
        <taxon>Basidiomycota</taxon>
        <taxon>Agaricomycotina</taxon>
        <taxon>Agaricomycetes</taxon>
        <taxon>Polyporales</taxon>
        <taxon>Phanerochaetaceae</taxon>
        <taxon>Phanerodontia</taxon>
    </lineage>
</organism>
<proteinExistence type="evidence at protein level"/>
<feature type="chain" id="PRO_0000459098" description="Self-sufficient cytochrome P450 monooxygenase CYP505E3">
    <location>
        <begin position="1"/>
        <end position="1057"/>
    </location>
</feature>
<feature type="domain" description="Flavodoxin-like" evidence="3">
    <location>
        <begin position="494"/>
        <end position="634"/>
    </location>
</feature>
<feature type="domain" description="FAD-binding FR-type" evidence="4">
    <location>
        <begin position="671"/>
        <end position="900"/>
    </location>
</feature>
<feature type="region of interest" description="Disordered" evidence="5">
    <location>
        <begin position="465"/>
        <end position="488"/>
    </location>
</feature>
<feature type="binding site" description="axial binding residue" evidence="1">
    <location>
        <position position="403"/>
    </location>
    <ligand>
        <name>heme</name>
        <dbReference type="ChEBI" id="CHEBI:30413"/>
    </ligand>
    <ligandPart>
        <name>Fe</name>
        <dbReference type="ChEBI" id="CHEBI:18248"/>
    </ligandPart>
</feature>
<feature type="binding site" evidence="3">
    <location>
        <begin position="500"/>
        <end position="504"/>
    </location>
    <ligand>
        <name>FMN</name>
        <dbReference type="ChEBI" id="CHEBI:58210"/>
    </ligand>
</feature>
<feature type="binding site" evidence="3">
    <location>
        <begin position="578"/>
        <end position="610"/>
    </location>
    <ligand>
        <name>FMN</name>
        <dbReference type="ChEBI" id="CHEBI:58210"/>
    </ligand>
</feature>
<feature type="mutagenesis site" description="Rduces the regioselectivity to omega-4, omega-5, and omega-6 hydroxylations." evidence="6">
    <original>V</original>
    <variation>Y</variation>
    <location>
        <position position="51"/>
    </location>
</feature>